<comment type="subcellular location">
    <subcellularLocation>
        <location evidence="2">Mitochondrion</location>
    </subcellularLocation>
</comment>
<comment type="similarity">
    <text evidence="2">Belongs to the PPR family. PCMP-E subfamily.</text>
</comment>
<comment type="sequence caution" evidence="2">
    <conflict type="erroneous gene model prediction">
        <sequence resource="EMBL-CDS" id="AAF24543"/>
    </conflict>
    <text>The predicted gene has been split into 2 genes: At1g28690 and At1g28695.</text>
</comment>
<comment type="sequence caution" evidence="2">
    <conflict type="erroneous termination">
        <sequence resource="EMBL-CDS" id="ABK28420"/>
    </conflict>
    <text>Extended C-terminus.</text>
</comment>
<comment type="online information" name="Pentatricopeptide repeat proteins">
    <link uri="https://ppr.plantenergy.uwa.edu.au"/>
</comment>
<protein>
    <recommendedName>
        <fullName>Pentatricopeptide repeat-containing protein At1g28690, mitochondrial</fullName>
    </recommendedName>
</protein>
<sequence length="520" mass="58138">MRIFRFTSISPRILPSNHYSTFPLKQNVSSLSPAKYIAGALQEHINSPAPKAGKKIHADIIKTGFQPDLNISIKLLILHLKCGCLSYARQVFDELPKPTLSAYNYMISGYLKHGLVKELLLLVQRMSYSGEKADGYTLSMVLKASNSRGSTMILPRSLCRLVHARIIKCDVELDDVLITALVDTYVKSGKLESARTVFETMKDENVVCCTSMISGYMNQGFVEDAEEIFNTTKVKDIVVYNAMVEGFSRSGETAKRSVDMYISMQRAGFHPNISTFASVIGACSVLTSHEVGQQVHAQIMKSGVYTHIKMGSSLLDMYAKCGGINDARRVFDQMQEKNVFSWTSMIDGYGKNGNPEEALELFTRMKEFRIEPNYVTFLGALSACSHSGLVDKGYEIFESMQRDYSMKPKMEHYACIVDLMGRAGDLNKAFEFARAMPERPDSDIWAALLSSCNLHGNVELASIAASELFKLNADKRPGAYLALSNVYASNDKWDNVSKIREVMKRRRISKTIGRSWTSED</sequence>
<gene>
    <name type="primary">PCMP-E34</name>
    <name type="ordered locus">At1g28690</name>
    <name type="ORF">F1K23.11</name>
</gene>
<proteinExistence type="evidence at transcript level"/>
<organism>
    <name type="scientific">Arabidopsis thaliana</name>
    <name type="common">Mouse-ear cress</name>
    <dbReference type="NCBI Taxonomy" id="3702"/>
    <lineage>
        <taxon>Eukaryota</taxon>
        <taxon>Viridiplantae</taxon>
        <taxon>Streptophyta</taxon>
        <taxon>Embryophyta</taxon>
        <taxon>Tracheophyta</taxon>
        <taxon>Spermatophyta</taxon>
        <taxon>Magnoliopsida</taxon>
        <taxon>eudicotyledons</taxon>
        <taxon>Gunneridae</taxon>
        <taxon>Pentapetalae</taxon>
        <taxon>rosids</taxon>
        <taxon>malvids</taxon>
        <taxon>Brassicales</taxon>
        <taxon>Brassicaceae</taxon>
        <taxon>Camelineae</taxon>
        <taxon>Arabidopsis</taxon>
    </lineage>
</organism>
<accession>Q1PFQ9</accession>
<accession>A0ME98</accession>
<accession>Q9SHQ3</accession>
<reference key="1">
    <citation type="journal article" date="2000" name="Nature">
        <title>Sequence and analysis of chromosome 1 of the plant Arabidopsis thaliana.</title>
        <authorList>
            <person name="Theologis A."/>
            <person name="Ecker J.R."/>
            <person name="Palm C.J."/>
            <person name="Federspiel N.A."/>
            <person name="Kaul S."/>
            <person name="White O."/>
            <person name="Alonso J."/>
            <person name="Altafi H."/>
            <person name="Araujo R."/>
            <person name="Bowman C.L."/>
            <person name="Brooks S.Y."/>
            <person name="Buehler E."/>
            <person name="Chan A."/>
            <person name="Chao Q."/>
            <person name="Chen H."/>
            <person name="Cheuk R.F."/>
            <person name="Chin C.W."/>
            <person name="Chung M.K."/>
            <person name="Conn L."/>
            <person name="Conway A.B."/>
            <person name="Conway A.R."/>
            <person name="Creasy T.H."/>
            <person name="Dewar K."/>
            <person name="Dunn P."/>
            <person name="Etgu P."/>
            <person name="Feldblyum T.V."/>
            <person name="Feng J.-D."/>
            <person name="Fong B."/>
            <person name="Fujii C.Y."/>
            <person name="Gill J.E."/>
            <person name="Goldsmith A.D."/>
            <person name="Haas B."/>
            <person name="Hansen N.F."/>
            <person name="Hughes B."/>
            <person name="Huizar L."/>
            <person name="Hunter J.L."/>
            <person name="Jenkins J."/>
            <person name="Johnson-Hopson C."/>
            <person name="Khan S."/>
            <person name="Khaykin E."/>
            <person name="Kim C.J."/>
            <person name="Koo H.L."/>
            <person name="Kremenetskaia I."/>
            <person name="Kurtz D.B."/>
            <person name="Kwan A."/>
            <person name="Lam B."/>
            <person name="Langin-Hooper S."/>
            <person name="Lee A."/>
            <person name="Lee J.M."/>
            <person name="Lenz C.A."/>
            <person name="Li J.H."/>
            <person name="Li Y.-P."/>
            <person name="Lin X."/>
            <person name="Liu S.X."/>
            <person name="Liu Z.A."/>
            <person name="Luros J.S."/>
            <person name="Maiti R."/>
            <person name="Marziali A."/>
            <person name="Militscher J."/>
            <person name="Miranda M."/>
            <person name="Nguyen M."/>
            <person name="Nierman W.C."/>
            <person name="Osborne B.I."/>
            <person name="Pai G."/>
            <person name="Peterson J."/>
            <person name="Pham P.K."/>
            <person name="Rizzo M."/>
            <person name="Rooney T."/>
            <person name="Rowley D."/>
            <person name="Sakano H."/>
            <person name="Salzberg S.L."/>
            <person name="Schwartz J.R."/>
            <person name="Shinn P."/>
            <person name="Southwick A.M."/>
            <person name="Sun H."/>
            <person name="Tallon L.J."/>
            <person name="Tambunga G."/>
            <person name="Toriumi M.J."/>
            <person name="Town C.D."/>
            <person name="Utterback T."/>
            <person name="Van Aken S."/>
            <person name="Vaysberg M."/>
            <person name="Vysotskaia V.S."/>
            <person name="Walker M."/>
            <person name="Wu D."/>
            <person name="Yu G."/>
            <person name="Fraser C.M."/>
            <person name="Venter J.C."/>
            <person name="Davis R.W."/>
        </authorList>
    </citation>
    <scope>NUCLEOTIDE SEQUENCE [LARGE SCALE GENOMIC DNA]</scope>
    <source>
        <strain>cv. Columbia</strain>
    </source>
</reference>
<reference key="2">
    <citation type="journal article" date="2017" name="Plant J.">
        <title>Araport11: a complete reannotation of the Arabidopsis thaliana reference genome.</title>
        <authorList>
            <person name="Cheng C.Y."/>
            <person name="Krishnakumar V."/>
            <person name="Chan A.P."/>
            <person name="Thibaud-Nissen F."/>
            <person name="Schobel S."/>
            <person name="Town C.D."/>
        </authorList>
    </citation>
    <scope>GENOME REANNOTATION</scope>
    <source>
        <strain>cv. Columbia</strain>
    </source>
</reference>
<reference key="3">
    <citation type="journal article" date="2006" name="Plant Biotechnol. J.">
        <title>Simultaneous high-throughput recombinational cloning of open reading frames in closed and open configurations.</title>
        <authorList>
            <person name="Underwood B.A."/>
            <person name="Vanderhaeghen R."/>
            <person name="Whitford R."/>
            <person name="Town C.D."/>
            <person name="Hilson P."/>
        </authorList>
    </citation>
    <scope>NUCLEOTIDE SEQUENCE [LARGE SCALE MRNA]</scope>
    <source>
        <strain>cv. Columbia</strain>
    </source>
</reference>
<reference key="4">
    <citation type="journal article" date="2000" name="Plant Mol. Biol.">
        <title>In Arabidopsis thaliana, 1% of the genome codes for a novel protein family unique to plants.</title>
        <authorList>
            <person name="Aubourg S."/>
            <person name="Boudet N."/>
            <person name="Kreis M."/>
            <person name="Lecharny A."/>
        </authorList>
    </citation>
    <scope>GENE FAMILY</scope>
</reference>
<reference key="5">
    <citation type="journal article" date="2004" name="Plant Cell">
        <title>Genome-wide analysis of Arabidopsis pentatricopeptide repeat proteins reveals their essential role in organelle biogenesis.</title>
        <authorList>
            <person name="Lurin C."/>
            <person name="Andres C."/>
            <person name="Aubourg S."/>
            <person name="Bellaoui M."/>
            <person name="Bitton F."/>
            <person name="Bruyere C."/>
            <person name="Caboche M."/>
            <person name="Debast C."/>
            <person name="Gualberto J."/>
            <person name="Hoffmann B."/>
            <person name="Lecharny A."/>
            <person name="Le Ret M."/>
            <person name="Martin-Magniette M.-L."/>
            <person name="Mireau H."/>
            <person name="Peeters N."/>
            <person name="Renou J.-P."/>
            <person name="Szurek B."/>
            <person name="Taconnat L."/>
            <person name="Small I."/>
        </authorList>
    </citation>
    <scope>GENE FAMILY</scope>
</reference>
<name>PPR62_ARATH</name>
<feature type="transit peptide" description="Mitochondrion" evidence="1">
    <location>
        <begin position="1"/>
        <end position="19"/>
    </location>
</feature>
<feature type="chain" id="PRO_0000342803" description="Pentatricopeptide repeat-containing protein At1g28690, mitochondrial">
    <location>
        <begin position="20"/>
        <end position="520"/>
    </location>
</feature>
<feature type="repeat" description="PPR 1">
    <location>
        <begin position="68"/>
        <end position="98"/>
    </location>
</feature>
<feature type="repeat" description="PPR 2">
    <location>
        <begin position="99"/>
        <end position="133"/>
    </location>
</feature>
<feature type="repeat" description="PPR 3">
    <location>
        <begin position="134"/>
        <end position="168"/>
    </location>
</feature>
<feature type="repeat" description="PPR 4">
    <location>
        <begin position="174"/>
        <end position="208"/>
    </location>
</feature>
<feature type="repeat" description="PPR 5">
    <location>
        <begin position="209"/>
        <end position="235"/>
    </location>
</feature>
<feature type="repeat" description="PPR 6">
    <location>
        <begin position="236"/>
        <end position="271"/>
    </location>
</feature>
<feature type="repeat" description="PPR 7">
    <location>
        <begin position="272"/>
        <end position="306"/>
    </location>
</feature>
<feature type="repeat" description="PPR 8">
    <location>
        <begin position="307"/>
        <end position="337"/>
    </location>
</feature>
<feature type="repeat" description="PPR 9">
    <location>
        <begin position="338"/>
        <end position="372"/>
    </location>
</feature>
<feature type="repeat" description="PPR 10">
    <location>
        <begin position="373"/>
        <end position="403"/>
    </location>
</feature>
<feature type="repeat" description="PPR 11">
    <location>
        <begin position="409"/>
        <end position="439"/>
    </location>
</feature>
<feature type="region of interest" description="Type E motif">
    <location>
        <begin position="444"/>
        <end position="520"/>
    </location>
</feature>
<feature type="sequence conflict" description="In Ref. 3; ABE65668." evidence="2" ref="3">
    <original>S</original>
    <variation>A</variation>
    <location>
        <position position="284"/>
    </location>
</feature>
<evidence type="ECO:0000255" key="1"/>
<evidence type="ECO:0000305" key="2"/>
<keyword id="KW-0496">Mitochondrion</keyword>
<keyword id="KW-1185">Reference proteome</keyword>
<keyword id="KW-0677">Repeat</keyword>
<keyword id="KW-0809">Transit peptide</keyword>
<dbReference type="EMBL" id="AC007508">
    <property type="protein sequence ID" value="AAF24543.1"/>
    <property type="status" value="ALT_SEQ"/>
    <property type="molecule type" value="Genomic_DNA"/>
</dbReference>
<dbReference type="EMBL" id="CP002684">
    <property type="protein sequence ID" value="AEE31014.1"/>
    <property type="molecule type" value="Genomic_DNA"/>
</dbReference>
<dbReference type="EMBL" id="DQ446304">
    <property type="protein sequence ID" value="ABE65668.1"/>
    <property type="molecule type" value="mRNA"/>
</dbReference>
<dbReference type="EMBL" id="DQ652867">
    <property type="protein sequence ID" value="ABK28420.1"/>
    <property type="status" value="ALT_SEQ"/>
    <property type="molecule type" value="mRNA"/>
</dbReference>
<dbReference type="RefSeq" id="NP_174190.2">
    <property type="nucleotide sequence ID" value="NM_102636.2"/>
</dbReference>
<dbReference type="SMR" id="Q1PFQ9"/>
<dbReference type="FunCoup" id="Q1PFQ9">
    <property type="interactions" value="492"/>
</dbReference>
<dbReference type="STRING" id="3702.Q1PFQ9"/>
<dbReference type="CAZy" id="GT77">
    <property type="family name" value="Glycosyltransferase Family 77"/>
</dbReference>
<dbReference type="iPTMnet" id="Q1PFQ9"/>
<dbReference type="PaxDb" id="3702-AT1G28690.1"/>
<dbReference type="ProteomicsDB" id="234895"/>
<dbReference type="EnsemblPlants" id="AT1G28690.1">
    <property type="protein sequence ID" value="AT1G28690.1"/>
    <property type="gene ID" value="AT1G28690"/>
</dbReference>
<dbReference type="GeneID" id="839769"/>
<dbReference type="Gramene" id="AT1G28690.1">
    <property type="protein sequence ID" value="AT1G28690.1"/>
    <property type="gene ID" value="AT1G28690"/>
</dbReference>
<dbReference type="KEGG" id="ath:AT1G28690"/>
<dbReference type="Araport" id="AT1G28690"/>
<dbReference type="TAIR" id="AT1G28690"/>
<dbReference type="eggNOG" id="KOG4197">
    <property type="taxonomic scope" value="Eukaryota"/>
</dbReference>
<dbReference type="HOGENOM" id="CLU_002706_0_2_1"/>
<dbReference type="InParanoid" id="Q1PFQ9"/>
<dbReference type="OMA" id="MKPKMEH"/>
<dbReference type="OrthoDB" id="185373at2759"/>
<dbReference type="PhylomeDB" id="Q1PFQ9"/>
<dbReference type="PRO" id="PR:Q1PFQ9"/>
<dbReference type="Proteomes" id="UP000006548">
    <property type="component" value="Chromosome 1"/>
</dbReference>
<dbReference type="ExpressionAtlas" id="Q1PFQ9">
    <property type="expression patterns" value="baseline and differential"/>
</dbReference>
<dbReference type="GO" id="GO:0005739">
    <property type="term" value="C:mitochondrion"/>
    <property type="evidence" value="ECO:0007669"/>
    <property type="project" value="UniProtKB-SubCell"/>
</dbReference>
<dbReference type="GO" id="GO:0003723">
    <property type="term" value="F:RNA binding"/>
    <property type="evidence" value="ECO:0007669"/>
    <property type="project" value="InterPro"/>
</dbReference>
<dbReference type="GO" id="GO:0009451">
    <property type="term" value="P:RNA modification"/>
    <property type="evidence" value="ECO:0007669"/>
    <property type="project" value="InterPro"/>
</dbReference>
<dbReference type="FunFam" id="1.25.40.10:FF:001306">
    <property type="entry name" value="Pentatricopeptide repeat-containing protein At1g28690, mitochondrial"/>
    <property type="match status" value="1"/>
</dbReference>
<dbReference type="FunFam" id="1.25.40.10:FF:002406">
    <property type="entry name" value="Pentatricopeptide repeat-containing protein At1g28690, mitochondrial"/>
    <property type="match status" value="1"/>
</dbReference>
<dbReference type="FunFam" id="1.25.40.10:FF:001797">
    <property type="entry name" value="Pentatricopeptide repeat-containing protein At4g14050, mitochondrial"/>
    <property type="match status" value="1"/>
</dbReference>
<dbReference type="FunFam" id="1.25.40.10:FF:001075">
    <property type="entry name" value="Pentatricopeptide repeat-containing protein, mitochondrial"/>
    <property type="match status" value="1"/>
</dbReference>
<dbReference type="Gene3D" id="1.25.40.10">
    <property type="entry name" value="Tetratricopeptide repeat domain"/>
    <property type="match status" value="4"/>
</dbReference>
<dbReference type="InterPro" id="IPR046848">
    <property type="entry name" value="E_motif"/>
</dbReference>
<dbReference type="InterPro" id="IPR002885">
    <property type="entry name" value="Pentatricopeptide_rpt"/>
</dbReference>
<dbReference type="InterPro" id="IPR046960">
    <property type="entry name" value="PPR_At4g14850-like_plant"/>
</dbReference>
<dbReference type="InterPro" id="IPR011990">
    <property type="entry name" value="TPR-like_helical_dom_sf"/>
</dbReference>
<dbReference type="NCBIfam" id="TIGR00756">
    <property type="entry name" value="PPR"/>
    <property type="match status" value="5"/>
</dbReference>
<dbReference type="PANTHER" id="PTHR47926:SF535">
    <property type="entry name" value="PENTACOTRIPEPTIDE-REPEAT REGION OF PRORP DOMAIN-CONTAINING PROTEIN"/>
    <property type="match status" value="1"/>
</dbReference>
<dbReference type="PANTHER" id="PTHR47926">
    <property type="entry name" value="PENTATRICOPEPTIDE REPEAT-CONTAINING PROTEIN"/>
    <property type="match status" value="1"/>
</dbReference>
<dbReference type="Pfam" id="PF20431">
    <property type="entry name" value="E_motif"/>
    <property type="match status" value="1"/>
</dbReference>
<dbReference type="Pfam" id="PF01535">
    <property type="entry name" value="PPR"/>
    <property type="match status" value="3"/>
</dbReference>
<dbReference type="Pfam" id="PF13041">
    <property type="entry name" value="PPR_2"/>
    <property type="match status" value="1"/>
</dbReference>
<dbReference type="SUPFAM" id="SSF48452">
    <property type="entry name" value="TPR-like"/>
    <property type="match status" value="1"/>
</dbReference>
<dbReference type="PROSITE" id="PS51375">
    <property type="entry name" value="PPR"/>
    <property type="match status" value="10"/>
</dbReference>